<dbReference type="EMBL" id="U51386">
    <property type="protein sequence ID" value="AAB38601.1"/>
    <property type="molecule type" value="Genomic_DNA"/>
</dbReference>
<dbReference type="SMR" id="P79693"/>
<dbReference type="Proteomes" id="UP000515129">
    <property type="component" value="Unplaced"/>
</dbReference>
<dbReference type="GO" id="GO:0005615">
    <property type="term" value="C:extracellular space"/>
    <property type="evidence" value="ECO:0007669"/>
    <property type="project" value="TreeGrafter"/>
</dbReference>
<dbReference type="GO" id="GO:0005886">
    <property type="term" value="C:plasma membrane"/>
    <property type="evidence" value="ECO:0007669"/>
    <property type="project" value="UniProtKB-SubCell"/>
</dbReference>
<dbReference type="GO" id="GO:0005509">
    <property type="term" value="F:calcium ion binding"/>
    <property type="evidence" value="ECO:0007669"/>
    <property type="project" value="TreeGrafter"/>
</dbReference>
<dbReference type="GO" id="GO:0005113">
    <property type="term" value="F:patched binding"/>
    <property type="evidence" value="ECO:0007669"/>
    <property type="project" value="TreeGrafter"/>
</dbReference>
<dbReference type="GO" id="GO:0008233">
    <property type="term" value="F:peptidase activity"/>
    <property type="evidence" value="ECO:0007669"/>
    <property type="project" value="UniProtKB-KW"/>
</dbReference>
<dbReference type="GO" id="GO:0001708">
    <property type="term" value="P:cell fate specification"/>
    <property type="evidence" value="ECO:0007669"/>
    <property type="project" value="TreeGrafter"/>
</dbReference>
<dbReference type="GO" id="GO:0007267">
    <property type="term" value="P:cell-cell signaling"/>
    <property type="evidence" value="ECO:0007669"/>
    <property type="project" value="InterPro"/>
</dbReference>
<dbReference type="GO" id="GO:0006508">
    <property type="term" value="P:proteolysis"/>
    <property type="evidence" value="ECO:0007669"/>
    <property type="project" value="UniProtKB-KW"/>
</dbReference>
<dbReference type="GO" id="GO:0010468">
    <property type="term" value="P:regulation of gene expression"/>
    <property type="evidence" value="ECO:0007669"/>
    <property type="project" value="TreeGrafter"/>
</dbReference>
<dbReference type="GO" id="GO:0007224">
    <property type="term" value="P:smoothened signaling pathway"/>
    <property type="evidence" value="ECO:0007669"/>
    <property type="project" value="TreeGrafter"/>
</dbReference>
<dbReference type="Gene3D" id="3.30.1380.10">
    <property type="match status" value="1"/>
</dbReference>
<dbReference type="InterPro" id="IPR001657">
    <property type="entry name" value="Hedgehog"/>
</dbReference>
<dbReference type="InterPro" id="IPR009045">
    <property type="entry name" value="Hedgehog_sig/DD-Pept_Zn-bd_sf"/>
</dbReference>
<dbReference type="InterPro" id="IPR050387">
    <property type="entry name" value="Hedgehog_Signaling"/>
</dbReference>
<dbReference type="InterPro" id="IPR000320">
    <property type="entry name" value="Hedgehog_signalling_dom"/>
</dbReference>
<dbReference type="PANTHER" id="PTHR11889">
    <property type="entry name" value="HEDGEHOG"/>
    <property type="match status" value="1"/>
</dbReference>
<dbReference type="PANTHER" id="PTHR11889:SF39">
    <property type="entry name" value="INDIAN HEDGEHOG PROTEIN"/>
    <property type="match status" value="1"/>
</dbReference>
<dbReference type="Pfam" id="PF01085">
    <property type="entry name" value="HH_signal"/>
    <property type="match status" value="1"/>
</dbReference>
<dbReference type="PRINTS" id="PR00632">
    <property type="entry name" value="SONICHHOG"/>
</dbReference>
<dbReference type="SUPFAM" id="SSF55166">
    <property type="entry name" value="Hedgehog/DD-peptidase"/>
    <property type="match status" value="1"/>
</dbReference>
<evidence type="ECO:0000250" key="1"/>
<evidence type="ECO:0000250" key="2">
    <source>
        <dbReference type="UniProtKB" id="Q14623"/>
    </source>
</evidence>
<evidence type="ECO:0000305" key="3"/>
<gene>
    <name type="primary">ihh</name>
</gene>
<keyword id="KW-0068">Autocatalytic cleavage</keyword>
<keyword id="KW-0106">Calcium</keyword>
<keyword id="KW-1003">Cell membrane</keyword>
<keyword id="KW-0217">Developmental protein</keyword>
<keyword id="KW-0378">Hydrolase</keyword>
<keyword id="KW-0449">Lipoprotein</keyword>
<keyword id="KW-0472">Membrane</keyword>
<keyword id="KW-0479">Metal-binding</keyword>
<keyword id="KW-0564">Palmitate</keyword>
<keyword id="KW-0645">Protease</keyword>
<keyword id="KW-1185">Reference proteome</keyword>
<keyword id="KW-0964">Secreted</keyword>
<keyword id="KW-0862">Zinc</keyword>
<reference key="1">
    <citation type="journal article" date="1996" name="Proc. Natl. Acad. Sci. U.S.A.">
        <title>Evolutionary analyses of hedgehog and Hoxd-10 genes in fish species closely related to the zebrafish.</title>
        <authorList>
            <person name="Zardoya R."/>
            <person name="Abouheif E."/>
            <person name="Meyer A."/>
        </authorList>
    </citation>
    <scope>NUCLEOTIDE SEQUENCE [GENOMIC DNA]</scope>
    <source>
        <tissue>Muscle</tissue>
    </source>
</reference>
<sequence length="58" mass="6658">VMNLWPGVRLRVTEGWDEDGHHSEESLHYEGRAVDITTSDRDRNKYAMLARLAVEAGF</sequence>
<organism>
    <name type="scientific">Carassius auratus</name>
    <name type="common">Goldfish</name>
    <dbReference type="NCBI Taxonomy" id="7957"/>
    <lineage>
        <taxon>Eukaryota</taxon>
        <taxon>Metazoa</taxon>
        <taxon>Chordata</taxon>
        <taxon>Craniata</taxon>
        <taxon>Vertebrata</taxon>
        <taxon>Euteleostomi</taxon>
        <taxon>Actinopterygii</taxon>
        <taxon>Neopterygii</taxon>
        <taxon>Teleostei</taxon>
        <taxon>Ostariophysi</taxon>
        <taxon>Cypriniformes</taxon>
        <taxon>Cyprinidae</taxon>
        <taxon>Cyprininae</taxon>
        <taxon>Carassius</taxon>
    </lineage>
</organism>
<comment type="function">
    <text evidence="1">Intercellular signal essential for a variety of patterning events during development.</text>
</comment>
<comment type="subcellular location">
    <subcellularLocation>
        <location evidence="1">Cell membrane</location>
    </subcellularLocation>
    <subcellularLocation>
        <location evidence="1">Secreted</location>
        <location evidence="1">Extracellular space</location>
    </subcellularLocation>
    <text evidence="1">Indian hedgehog protein N-product: Cell membrane; Lipid-anchor; Extracellular side. The N-terminal peptide remains associated with the cell surface. Indian hedgehog protein C-product: Secreted, extracellular space. The C-terminal peptide diffuses from the cell.</text>
</comment>
<comment type="domain">
    <text evidence="1">The indian hedgehog protein N-product binds calcium and zinc ions; this stabilizes the protein fold and is essential for protein-protein interactions mediated by this domain.</text>
</comment>
<comment type="PTM">
    <text evidence="1">The C-terminal domain displays an autoproteolysis activity and a cholesterol transferase activity. Both activities result in the cleavage of the full-length protein and covalent attachment of a cholesterol moiety to the C-terminal of the newly generated N-terminal fragment (N-product). The N-product is the active species in both local and long-range signaling, whereas the C-product has no signaling activity (By similarity).</text>
</comment>
<comment type="PTM">
    <text evidence="1">Cholesterylation is required for N-product targeting to lipid rafts and multimerization.</text>
</comment>
<comment type="PTM">
    <text evidence="1">N-palmitoylation is required for N-product multimerization and full activity.</text>
</comment>
<comment type="similarity">
    <text evidence="3">Belongs to the hedgehog family.</text>
</comment>
<proteinExistence type="inferred from homology"/>
<accession>P79693</accession>
<name>IHH_CARAU</name>
<feature type="chain" id="PRO_0000058739" description="Indian hedgehog protein">
    <location>
        <begin position="1" status="less than"/>
        <end position="58" status="greater than"/>
    </location>
</feature>
<feature type="binding site" evidence="2">
    <location>
        <position position="13"/>
    </location>
    <ligand>
        <name>Ca(2+)</name>
        <dbReference type="ChEBI" id="CHEBI:29108"/>
        <label>1</label>
    </ligand>
</feature>
<feature type="binding site" evidence="2">
    <location>
        <position position="14"/>
    </location>
    <ligand>
        <name>Ca(2+)</name>
        <dbReference type="ChEBI" id="CHEBI:29108"/>
        <label>1</label>
    </ligand>
</feature>
<feature type="binding site" evidence="2">
    <location>
        <position position="14"/>
    </location>
    <ligand>
        <name>Ca(2+)</name>
        <dbReference type="ChEBI" id="CHEBI:29108"/>
        <label>2</label>
    </ligand>
</feature>
<feature type="binding site" evidence="2">
    <location>
        <position position="17"/>
    </location>
    <ligand>
        <name>Ca(2+)</name>
        <dbReference type="ChEBI" id="CHEBI:29108"/>
        <label>2</label>
    </ligand>
</feature>
<feature type="binding site" evidence="2">
    <location>
        <position position="19"/>
    </location>
    <ligand>
        <name>Ca(2+)</name>
        <dbReference type="ChEBI" id="CHEBI:29108"/>
        <label>2</label>
    </ligand>
</feature>
<feature type="binding site" evidence="2">
    <location>
        <position position="28"/>
    </location>
    <ligand>
        <name>Zn(2+)</name>
        <dbReference type="ChEBI" id="CHEBI:29105"/>
    </ligand>
</feature>
<feature type="binding site" evidence="2">
    <location>
        <position position="35"/>
    </location>
    <ligand>
        <name>Zn(2+)</name>
        <dbReference type="ChEBI" id="CHEBI:29105"/>
    </ligand>
</feature>
<feature type="non-terminal residue">
    <location>
        <position position="1"/>
    </location>
</feature>
<feature type="non-terminal residue">
    <location>
        <position position="58"/>
    </location>
</feature>
<protein>
    <recommendedName>
        <fullName>Indian hedgehog protein</fullName>
        <shortName>IHH</shortName>
    </recommendedName>
</protein>